<dbReference type="EC" id="2.6.1.52" evidence="1"/>
<dbReference type="EMBL" id="CP000025">
    <property type="protein sequence ID" value="AAW34960.1"/>
    <property type="molecule type" value="Genomic_DNA"/>
</dbReference>
<dbReference type="RefSeq" id="WP_011049662.1">
    <property type="nucleotide sequence ID" value="NC_003912.7"/>
</dbReference>
<dbReference type="SMR" id="Q5HWE5"/>
<dbReference type="KEGG" id="cjr:CJE0371"/>
<dbReference type="HOGENOM" id="CLU_034866_0_2_7"/>
<dbReference type="UniPathway" id="UPA00135">
    <property type="reaction ID" value="UER00197"/>
</dbReference>
<dbReference type="UniPathway" id="UPA00244">
    <property type="reaction ID" value="UER00311"/>
</dbReference>
<dbReference type="GO" id="GO:0005737">
    <property type="term" value="C:cytoplasm"/>
    <property type="evidence" value="ECO:0007669"/>
    <property type="project" value="UniProtKB-SubCell"/>
</dbReference>
<dbReference type="GO" id="GO:0004648">
    <property type="term" value="F:O-phospho-L-serine:2-oxoglutarate aminotransferase activity"/>
    <property type="evidence" value="ECO:0007669"/>
    <property type="project" value="UniProtKB-UniRule"/>
</dbReference>
<dbReference type="GO" id="GO:0030170">
    <property type="term" value="F:pyridoxal phosphate binding"/>
    <property type="evidence" value="ECO:0007669"/>
    <property type="project" value="UniProtKB-UniRule"/>
</dbReference>
<dbReference type="GO" id="GO:0006564">
    <property type="term" value="P:L-serine biosynthetic process"/>
    <property type="evidence" value="ECO:0007669"/>
    <property type="project" value="UniProtKB-UniRule"/>
</dbReference>
<dbReference type="GO" id="GO:0008615">
    <property type="term" value="P:pyridoxine biosynthetic process"/>
    <property type="evidence" value="ECO:0007669"/>
    <property type="project" value="UniProtKB-UniRule"/>
</dbReference>
<dbReference type="CDD" id="cd00611">
    <property type="entry name" value="PSAT_like"/>
    <property type="match status" value="1"/>
</dbReference>
<dbReference type="FunFam" id="3.40.640.10:FF:000010">
    <property type="entry name" value="Phosphoserine aminotransferase"/>
    <property type="match status" value="1"/>
</dbReference>
<dbReference type="FunFam" id="3.90.1150.10:FF:000006">
    <property type="entry name" value="Phosphoserine aminotransferase"/>
    <property type="match status" value="1"/>
</dbReference>
<dbReference type="Gene3D" id="3.90.1150.10">
    <property type="entry name" value="Aspartate Aminotransferase, domain 1"/>
    <property type="match status" value="1"/>
</dbReference>
<dbReference type="Gene3D" id="3.40.640.10">
    <property type="entry name" value="Type I PLP-dependent aspartate aminotransferase-like (Major domain)"/>
    <property type="match status" value="1"/>
</dbReference>
<dbReference type="HAMAP" id="MF_00160">
    <property type="entry name" value="SerC_aminotrans_5"/>
    <property type="match status" value="1"/>
</dbReference>
<dbReference type="InterPro" id="IPR000192">
    <property type="entry name" value="Aminotrans_V_dom"/>
</dbReference>
<dbReference type="InterPro" id="IPR022278">
    <property type="entry name" value="Pser_aminoTfrase"/>
</dbReference>
<dbReference type="InterPro" id="IPR015424">
    <property type="entry name" value="PyrdxlP-dep_Trfase"/>
</dbReference>
<dbReference type="InterPro" id="IPR015421">
    <property type="entry name" value="PyrdxlP-dep_Trfase_major"/>
</dbReference>
<dbReference type="InterPro" id="IPR015422">
    <property type="entry name" value="PyrdxlP-dep_Trfase_small"/>
</dbReference>
<dbReference type="NCBIfam" id="NF003764">
    <property type="entry name" value="PRK05355.1"/>
    <property type="match status" value="1"/>
</dbReference>
<dbReference type="NCBIfam" id="TIGR01364">
    <property type="entry name" value="serC_1"/>
    <property type="match status" value="1"/>
</dbReference>
<dbReference type="PANTHER" id="PTHR43247">
    <property type="entry name" value="PHOSPHOSERINE AMINOTRANSFERASE"/>
    <property type="match status" value="1"/>
</dbReference>
<dbReference type="PANTHER" id="PTHR43247:SF1">
    <property type="entry name" value="PHOSPHOSERINE AMINOTRANSFERASE"/>
    <property type="match status" value="1"/>
</dbReference>
<dbReference type="Pfam" id="PF00266">
    <property type="entry name" value="Aminotran_5"/>
    <property type="match status" value="1"/>
</dbReference>
<dbReference type="PIRSF" id="PIRSF000525">
    <property type="entry name" value="SerC"/>
    <property type="match status" value="1"/>
</dbReference>
<dbReference type="SUPFAM" id="SSF53383">
    <property type="entry name" value="PLP-dependent transferases"/>
    <property type="match status" value="1"/>
</dbReference>
<comment type="function">
    <text evidence="1">Catalyzes the reversible conversion of 3-phosphohydroxypyruvate to phosphoserine and of 3-hydroxy-2-oxo-4-phosphonooxybutanoate to phosphohydroxythreonine.</text>
</comment>
<comment type="catalytic activity">
    <reaction evidence="1">
        <text>O-phospho-L-serine + 2-oxoglutarate = 3-phosphooxypyruvate + L-glutamate</text>
        <dbReference type="Rhea" id="RHEA:14329"/>
        <dbReference type="ChEBI" id="CHEBI:16810"/>
        <dbReference type="ChEBI" id="CHEBI:18110"/>
        <dbReference type="ChEBI" id="CHEBI:29985"/>
        <dbReference type="ChEBI" id="CHEBI:57524"/>
        <dbReference type="EC" id="2.6.1.52"/>
    </reaction>
</comment>
<comment type="catalytic activity">
    <reaction evidence="1">
        <text>4-(phosphooxy)-L-threonine + 2-oxoglutarate = (R)-3-hydroxy-2-oxo-4-phosphooxybutanoate + L-glutamate</text>
        <dbReference type="Rhea" id="RHEA:16573"/>
        <dbReference type="ChEBI" id="CHEBI:16810"/>
        <dbReference type="ChEBI" id="CHEBI:29985"/>
        <dbReference type="ChEBI" id="CHEBI:58452"/>
        <dbReference type="ChEBI" id="CHEBI:58538"/>
        <dbReference type="EC" id="2.6.1.52"/>
    </reaction>
</comment>
<comment type="cofactor">
    <cofactor evidence="1">
        <name>pyridoxal 5'-phosphate</name>
        <dbReference type="ChEBI" id="CHEBI:597326"/>
    </cofactor>
    <text evidence="1">Binds 1 pyridoxal phosphate per subunit.</text>
</comment>
<comment type="pathway">
    <text evidence="1">Amino-acid biosynthesis; L-serine biosynthesis; L-serine from 3-phospho-D-glycerate: step 2/3.</text>
</comment>
<comment type="pathway">
    <text evidence="1">Cofactor biosynthesis; pyridoxine 5'-phosphate biosynthesis; pyridoxine 5'-phosphate from D-erythrose 4-phosphate: step 3/5.</text>
</comment>
<comment type="subunit">
    <text evidence="1">Homodimer.</text>
</comment>
<comment type="subcellular location">
    <subcellularLocation>
        <location evidence="1">Cytoplasm</location>
    </subcellularLocation>
</comment>
<comment type="similarity">
    <text evidence="1">Belongs to the class-V pyridoxal-phosphate-dependent aminotransferase family. SerC subfamily.</text>
</comment>
<accession>Q5HWE5</accession>
<sequence length="358" mass="40465">MRKINFSAGPSTLPLEILEQAQKELCDYQGRGYSIMEISHRTKVFEEVHFGAQEKAKKLYGLNDDYEVLFLQGGASLQFAMIPMNLALNGICEYANTGVWTKKAIKEAQILGVNVKTVASSEESNFNHIPRVEFRDNADYAYICSNNTIYGTQYQNYPKTKTPLIVDASSDFFSRKVDFSNIALFYGGVQKNAGISGLSCIFIRKDMLERSKNKQIPSMLNYLTHAENQSLFNTPPTFAIYMFILEMDWLLNQGGLDKVHEKNSQKAAMLYECIDLSNGFYKGHADKKDRSLMNVSFNIAKNKDLEPLFVKEAEEAGMIGLKGHRILGGIRASIYNALNLDQVKTLCEFMKEFQGKYA</sequence>
<gene>
    <name evidence="1" type="primary">serC</name>
    <name type="ordered locus">CJE0371</name>
</gene>
<evidence type="ECO:0000255" key="1">
    <source>
        <dbReference type="HAMAP-Rule" id="MF_00160"/>
    </source>
</evidence>
<protein>
    <recommendedName>
        <fullName evidence="1">Phosphoserine aminotransferase</fullName>
        <ecNumber evidence="1">2.6.1.52</ecNumber>
    </recommendedName>
    <alternativeName>
        <fullName evidence="1">Phosphohydroxythreonine aminotransferase</fullName>
        <shortName evidence="1">PSAT</shortName>
    </alternativeName>
</protein>
<reference key="1">
    <citation type="journal article" date="2005" name="PLoS Biol.">
        <title>Major structural differences and novel potential virulence mechanisms from the genomes of multiple Campylobacter species.</title>
        <authorList>
            <person name="Fouts D.E."/>
            <person name="Mongodin E.F."/>
            <person name="Mandrell R.E."/>
            <person name="Miller W.G."/>
            <person name="Rasko D.A."/>
            <person name="Ravel J."/>
            <person name="Brinkac L.M."/>
            <person name="DeBoy R.T."/>
            <person name="Parker C.T."/>
            <person name="Daugherty S.C."/>
            <person name="Dodson R.J."/>
            <person name="Durkin A.S."/>
            <person name="Madupu R."/>
            <person name="Sullivan S.A."/>
            <person name="Shetty J.U."/>
            <person name="Ayodeji M.A."/>
            <person name="Shvartsbeyn A."/>
            <person name="Schatz M.C."/>
            <person name="Badger J.H."/>
            <person name="Fraser C.M."/>
            <person name="Nelson K.E."/>
        </authorList>
    </citation>
    <scope>NUCLEOTIDE SEQUENCE [LARGE SCALE GENOMIC DNA]</scope>
    <source>
        <strain>RM1221</strain>
    </source>
</reference>
<organism>
    <name type="scientific">Campylobacter jejuni (strain RM1221)</name>
    <dbReference type="NCBI Taxonomy" id="195099"/>
    <lineage>
        <taxon>Bacteria</taxon>
        <taxon>Pseudomonadati</taxon>
        <taxon>Campylobacterota</taxon>
        <taxon>Epsilonproteobacteria</taxon>
        <taxon>Campylobacterales</taxon>
        <taxon>Campylobacteraceae</taxon>
        <taxon>Campylobacter</taxon>
    </lineage>
</organism>
<feature type="chain" id="PRO_0000150162" description="Phosphoserine aminotransferase">
    <location>
        <begin position="1"/>
        <end position="358"/>
    </location>
</feature>
<feature type="binding site" evidence="1">
    <location>
        <position position="41"/>
    </location>
    <ligand>
        <name>L-glutamate</name>
        <dbReference type="ChEBI" id="CHEBI:29985"/>
    </ligand>
</feature>
<feature type="binding site" evidence="1">
    <location>
        <begin position="75"/>
        <end position="76"/>
    </location>
    <ligand>
        <name>pyridoxal 5'-phosphate</name>
        <dbReference type="ChEBI" id="CHEBI:597326"/>
    </ligand>
</feature>
<feature type="binding site" evidence="1">
    <location>
        <position position="100"/>
    </location>
    <ligand>
        <name>pyridoxal 5'-phosphate</name>
        <dbReference type="ChEBI" id="CHEBI:597326"/>
    </ligand>
</feature>
<feature type="binding site" evidence="1">
    <location>
        <position position="148"/>
    </location>
    <ligand>
        <name>pyridoxal 5'-phosphate</name>
        <dbReference type="ChEBI" id="CHEBI:597326"/>
    </ligand>
</feature>
<feature type="binding site" evidence="1">
    <location>
        <position position="167"/>
    </location>
    <ligand>
        <name>pyridoxal 5'-phosphate</name>
        <dbReference type="ChEBI" id="CHEBI:597326"/>
    </ligand>
</feature>
<feature type="binding site" evidence="1">
    <location>
        <position position="190"/>
    </location>
    <ligand>
        <name>pyridoxal 5'-phosphate</name>
        <dbReference type="ChEBI" id="CHEBI:597326"/>
    </ligand>
</feature>
<feature type="binding site" evidence="1">
    <location>
        <begin position="233"/>
        <end position="234"/>
    </location>
    <ligand>
        <name>pyridoxal 5'-phosphate</name>
        <dbReference type="ChEBI" id="CHEBI:597326"/>
    </ligand>
</feature>
<feature type="modified residue" description="N6-(pyridoxal phosphate)lysine" evidence="1">
    <location>
        <position position="191"/>
    </location>
</feature>
<keyword id="KW-0028">Amino-acid biosynthesis</keyword>
<keyword id="KW-0032">Aminotransferase</keyword>
<keyword id="KW-0963">Cytoplasm</keyword>
<keyword id="KW-0663">Pyridoxal phosphate</keyword>
<keyword id="KW-0664">Pyridoxine biosynthesis</keyword>
<keyword id="KW-0718">Serine biosynthesis</keyword>
<keyword id="KW-0808">Transferase</keyword>
<name>SERC_CAMJR</name>
<proteinExistence type="inferred from homology"/>